<feature type="chain" id="PRO_1000021947" description="RNA pyrophosphohydrolase">
    <location>
        <begin position="1"/>
        <end position="155"/>
    </location>
</feature>
<feature type="domain" description="Nudix hydrolase" evidence="1">
    <location>
        <begin position="6"/>
        <end position="148"/>
    </location>
</feature>
<feature type="short sequence motif" description="Nudix box">
    <location>
        <begin position="38"/>
        <end position="59"/>
    </location>
</feature>
<name>RPPH_FRATO</name>
<gene>
    <name evidence="1" type="primary">rppH</name>
    <name evidence="1" type="synonym">nudH</name>
    <name type="ordered locus">FTH_1668</name>
</gene>
<sequence length="155" mass="18561">MIDKSGYRANVAIVLLNKQNRVFWGQRRNRTSWQFPQGGVATGETPLQAMYRELHEEIGLRPQDVEVIASTRDWYKYDIPDSLVRTKEPICIGQKQKWFLLKLKSPESYIDLDANDSPEFDNWRWVSYWYPINHVVYFKQEVYRKALTYFKEYIA</sequence>
<dbReference type="EC" id="3.6.1.-" evidence="1"/>
<dbReference type="EMBL" id="CP000437">
    <property type="protein sequence ID" value="ABI83444.1"/>
    <property type="molecule type" value="Genomic_DNA"/>
</dbReference>
<dbReference type="RefSeq" id="WP_003017197.1">
    <property type="nucleotide sequence ID" value="NC_017463.1"/>
</dbReference>
<dbReference type="SMR" id="Q0BKE0"/>
<dbReference type="KEGG" id="fth:FTH_1668"/>
<dbReference type="GO" id="GO:0016462">
    <property type="term" value="F:pyrophosphatase activity"/>
    <property type="evidence" value="ECO:0007669"/>
    <property type="project" value="UniProtKB-ARBA"/>
</dbReference>
<dbReference type="CDD" id="cd03671">
    <property type="entry name" value="NUDIX_Ap4A_hydrolase_plant_like"/>
    <property type="match status" value="1"/>
</dbReference>
<dbReference type="Gene3D" id="3.90.79.10">
    <property type="entry name" value="Nucleoside Triphosphate Pyrophosphohydrolase"/>
    <property type="match status" value="1"/>
</dbReference>
<dbReference type="HAMAP" id="MF_00298">
    <property type="entry name" value="Nudix_RppH"/>
    <property type="match status" value="1"/>
</dbReference>
<dbReference type="InterPro" id="IPR020476">
    <property type="entry name" value="Nudix_hydrolase"/>
</dbReference>
<dbReference type="InterPro" id="IPR015797">
    <property type="entry name" value="NUDIX_hydrolase-like_dom_sf"/>
</dbReference>
<dbReference type="InterPro" id="IPR020084">
    <property type="entry name" value="NUDIX_hydrolase_CS"/>
</dbReference>
<dbReference type="InterPro" id="IPR000086">
    <property type="entry name" value="NUDIX_hydrolase_dom"/>
</dbReference>
<dbReference type="InterPro" id="IPR022927">
    <property type="entry name" value="RppH"/>
</dbReference>
<dbReference type="NCBIfam" id="NF001936">
    <property type="entry name" value="PRK00714.1-3"/>
    <property type="match status" value="1"/>
</dbReference>
<dbReference type="NCBIfam" id="NF001937">
    <property type="entry name" value="PRK00714.1-4"/>
    <property type="match status" value="1"/>
</dbReference>
<dbReference type="NCBIfam" id="NF001938">
    <property type="entry name" value="PRK00714.1-5"/>
    <property type="match status" value="1"/>
</dbReference>
<dbReference type="PANTHER" id="PTHR43736">
    <property type="entry name" value="ADP-RIBOSE PYROPHOSPHATASE"/>
    <property type="match status" value="1"/>
</dbReference>
<dbReference type="PANTHER" id="PTHR43736:SF1">
    <property type="entry name" value="DIHYDRONEOPTERIN TRIPHOSPHATE DIPHOSPHATASE"/>
    <property type="match status" value="1"/>
</dbReference>
<dbReference type="Pfam" id="PF00293">
    <property type="entry name" value="NUDIX"/>
    <property type="match status" value="1"/>
</dbReference>
<dbReference type="PRINTS" id="PR00502">
    <property type="entry name" value="NUDIXFAMILY"/>
</dbReference>
<dbReference type="SUPFAM" id="SSF55811">
    <property type="entry name" value="Nudix"/>
    <property type="match status" value="1"/>
</dbReference>
<dbReference type="PROSITE" id="PS51462">
    <property type="entry name" value="NUDIX"/>
    <property type="match status" value="1"/>
</dbReference>
<dbReference type="PROSITE" id="PS00893">
    <property type="entry name" value="NUDIX_BOX"/>
    <property type="match status" value="1"/>
</dbReference>
<keyword id="KW-0378">Hydrolase</keyword>
<evidence type="ECO:0000255" key="1">
    <source>
        <dbReference type="HAMAP-Rule" id="MF_00298"/>
    </source>
</evidence>
<protein>
    <recommendedName>
        <fullName evidence="1">RNA pyrophosphohydrolase</fullName>
        <ecNumber evidence="1">3.6.1.-</ecNumber>
    </recommendedName>
    <alternativeName>
        <fullName evidence="1">(Di)nucleoside polyphosphate hydrolase</fullName>
    </alternativeName>
</protein>
<comment type="function">
    <text evidence="1">Accelerates the degradation of transcripts by removing pyrophosphate from the 5'-end of triphosphorylated RNA, leading to a more labile monophosphorylated state that can stimulate subsequent ribonuclease cleavage.</text>
</comment>
<comment type="cofactor">
    <cofactor evidence="1">
        <name>a divalent metal cation</name>
        <dbReference type="ChEBI" id="CHEBI:60240"/>
    </cofactor>
</comment>
<comment type="similarity">
    <text evidence="1">Belongs to the Nudix hydrolase family. RppH subfamily.</text>
</comment>
<reference key="1">
    <citation type="journal article" date="2006" name="J. Bacteriol.">
        <title>Chromosome rearrangement and diversification of Francisella tularensis revealed by the type B (OSU18) genome sequence.</title>
        <authorList>
            <person name="Petrosino J.F."/>
            <person name="Xiang Q."/>
            <person name="Karpathy S.E."/>
            <person name="Jiang H."/>
            <person name="Yerrapragada S."/>
            <person name="Liu Y."/>
            <person name="Gioia J."/>
            <person name="Hemphill L."/>
            <person name="Gonzalez A."/>
            <person name="Raghavan T.M."/>
            <person name="Uzman A."/>
            <person name="Fox G.E."/>
            <person name="Highlander S."/>
            <person name="Reichard M."/>
            <person name="Morton R.J."/>
            <person name="Clinkenbeard K.D."/>
            <person name="Weinstock G.M."/>
        </authorList>
    </citation>
    <scope>NUCLEOTIDE SEQUENCE [LARGE SCALE GENOMIC DNA]</scope>
    <source>
        <strain>OSU18</strain>
    </source>
</reference>
<accession>Q0BKE0</accession>
<proteinExistence type="inferred from homology"/>
<organism>
    <name type="scientific">Francisella tularensis subsp. holarctica (strain OSU18)</name>
    <dbReference type="NCBI Taxonomy" id="393011"/>
    <lineage>
        <taxon>Bacteria</taxon>
        <taxon>Pseudomonadati</taxon>
        <taxon>Pseudomonadota</taxon>
        <taxon>Gammaproteobacteria</taxon>
        <taxon>Thiotrichales</taxon>
        <taxon>Francisellaceae</taxon>
        <taxon>Francisella</taxon>
    </lineage>
</organism>